<gene>
    <name type="primary">Myo1e</name>
    <name type="synonym">Myr3</name>
</gene>
<protein>
    <recommendedName>
        <fullName>Unconventional myosin-Ie</fullName>
    </recommendedName>
    <alternativeName>
        <fullName>Myosin heavy chain myr 3</fullName>
    </alternativeName>
    <alternativeName>
        <fullName>Unconventional myosin 1E</fullName>
    </alternativeName>
</protein>
<sequence>MGSKGAYRYHWQSHNVKHSGVDDMVLLSKITESSIVENLKKRYMDDYIFTYIGSVLISVNPFKQMPYFGEKEIEMYQGAAQYENPPHIYALADSMYRNMIIDRENQCVIISGESGAGKTVAAKYIMSYVSRVSGGGPKVQHVKDIILQSNPLLEAFGNAKTVRNNNSSRFGKYFEIQFSPGGEPDGGKISNFLLEKSRVVMRNPGERSFHIFYQLIEGASPEQKQSLGITSMDYYYYLSLSGSYKVDDIDDKRDFQETLHAMNVIGIFSEEQTLVLQIVAGILHLGNINFKEVGNYAAVESEEFLAFPAYLLGINQDRLKEKLTSRQMDSKWGGKSESIHVTLNVEQACYTRDALAKALHARVFDFLVDSINKAMEKDHEEYNIGVLDIYGFEIFQKNGFEQFCINFVNEKLQQIFIELTLKAEQEEYVQEGIRWTPIEYFNNKIVCDLIESKVNPPGIMSILDDVCATMHAVGEGADQTLLQKLQMQIGSHEHFNSWNQGFIIHHYAGKVSYDMDGFCERNRDVLFMDLIELMQSSELPFIKSLFPENLQADKKGRPTTAGSKIKKQANDLVSTLMKCTPHYIRCIKPNETKKPKDWEESRVKHQVEYLGLKENIRVRRAGYAYRRVFQKFLQRYAILTKATWPVWRGDEKQGVLHLLQSVNMDSDQFQLGRSKVFIKAPESLFLLEEMRERKYDGYARVIQKTWRKFVARKKYVQMREDASDLLLNKKERRRNSINRNFIGDYIGMEEHPELQQFVGKREKIDFADIVTKYDRRFKGVKRDLLLTPKCLYLIGREKVKQGPDKGLVKEVLKRKIEVERILSVSLSTMQDDIFILHEQEYDSLLESVFKTEFLSLLTKRYEEKTQKQLPLKFSNTLELKLKKENWGPWSAGGSRQVQFYQGFGDLAILKPSNKVLQVSIGPGLPKNARPTRRNTVSSRGYSGGTNNNYPMRAAPAPPGCHRNGLTRNQFVHPPRASGNQRSNQKSLYTSMARPPLPRQQSTGSDRLSQTPESLDFLKVPDQGAAGVRRQTTSRPPPAGGRPKPQPKPKPQVPQCKALYAYDAQDTDELSFNANDVIDIIKEDPSGWWTGRLRGKQGLFPNNYVTKI</sequence>
<keyword id="KW-0009">Actin-binding</keyword>
<keyword id="KW-0067">ATP-binding</keyword>
<keyword id="KW-0112">Calmodulin-binding</keyword>
<keyword id="KW-0965">Cell junction</keyword>
<keyword id="KW-0963">Cytoplasm</keyword>
<keyword id="KW-0968">Cytoplasmic vesicle</keyword>
<keyword id="KW-0206">Cytoskeleton</keyword>
<keyword id="KW-0446">Lipid-binding</keyword>
<keyword id="KW-0505">Motor protein</keyword>
<keyword id="KW-0518">Myosin</keyword>
<keyword id="KW-0547">Nucleotide-binding</keyword>
<keyword id="KW-0597">Phosphoprotein</keyword>
<keyword id="KW-1185">Reference proteome</keyword>
<keyword id="KW-0728">SH3 domain</keyword>
<reference key="1">
    <citation type="journal article" date="1995" name="J. Cell Biol.">
        <title>A novel mammalian myosin I from rat with an SH3 domain localizes to Con A-inducible, F-actin-rich structures at cell-cell contacts.</title>
        <authorList>
            <person name="Stoeffler H.E."/>
            <person name="Ruppert C."/>
            <person name="Reinhard J."/>
            <person name="Bahler M."/>
        </authorList>
    </citation>
    <scope>NUCLEOTIDE SEQUENCE [MRNA]</scope>
    <scope>ACTIN-BINDING</scope>
    <scope>INTERACTION WITH CALM</scope>
    <scope>SUBCELLULAR LOCATION</scope>
    <scope>TISSUE SPECIFICITY</scope>
    <source>
        <strain>Sprague-Dawley</strain>
    </source>
</reference>
<reference key="2">
    <citation type="journal article" date="2002" name="J. Assoc. Res. Otolaryngol.">
        <title>Myosin-I isozymes in neonatal rodent auditory and vestibular epithelia.</title>
        <authorList>
            <person name="Dumont R.A."/>
            <person name="Zhao Y.-D."/>
            <person name="Holt J.R."/>
            <person name="Baehler M."/>
            <person name="Gillespie P.G."/>
        </authorList>
    </citation>
    <scope>TISSUE SPECIFICITY</scope>
</reference>
<comment type="function">
    <text evidence="1">Myosins are actin-based motor molecules with ATPase activity. Unconventional myosins serve in intracellular movements. Their highly divergent tails bind to membranous compartments, which are then moved relative to actin filaments. Binds to membranes containing anionic phospholipids via its tail domain. Involved in clathrin-mediated endocytosis and intracellular movement of clathrin-coated ve (By similarity)sicles. Required for normal morphology of the glomerular basement membrane, normal development of foot processes by kidney podocytes and normal kidney function (By similarity). In dendritic cells, may control the movement of class II-containing cytoplasmic vesicles along the actin cytoskeleton by connecting them with the actin network via ARL14EP and ARL14 (By similarity).</text>
</comment>
<comment type="subunit">
    <text evidence="2 10">Interacts with CALM and F-actin (PubMed:7730414). Interacts (via SH3 domain) with SYNJ1, DNM1 and DNM2. Interacts with ARL14EP. Interacts with CARMIL1 (By similarity).</text>
</comment>
<comment type="subcellular location">
    <subcellularLocation>
        <location evidence="10">Cytoplasm</location>
    </subcellularLocation>
    <subcellularLocation>
        <location evidence="10">Cytoplasm</location>
        <location evidence="10">Cytoskeleton</location>
    </subcellularLocation>
    <subcellularLocation>
        <location evidence="12">Cytoplasmic vesicle</location>
    </subcellularLocation>
    <subcellularLocation>
        <location evidence="1">Cytoplasmic vesicle</location>
        <location evidence="1">Clathrin-coated vesicle</location>
    </subcellularLocation>
    <subcellularLocation>
        <location evidence="10">Cell junction</location>
    </subcellularLocation>
    <text evidence="1">In cultured podocytes, it localizes close to and is associated with the cytoplasmic membrane, with enrichment at the lamellipodia tips. Colocalizes with cytoplasmic vesicles, including endocytic clathrin-coated vesicles. Colocalizes with dynamin at cytoplasmic vesicles (By similarity). Detected in cytoplasmic punctae. Colocalizes with F-actin.</text>
</comment>
<comment type="tissue specificity">
    <text evidence="9 10">Detected in brain stem, brain cortex, cerebellum, stomach, colon, heart, lung, liver, spleen and kidney. Detected in utricle, cochlea, outer hair cell bundle cuticular plate and vestibular epithelia (at protein level). Detected in cochlea and vestibular tissues. Detected in kidney, lung, spleen and intestine.</text>
</comment>
<comment type="similarity">
    <text evidence="11">Belongs to the TRAFAC class myosin-kinesin ATPase superfamily. Myosin family.</text>
</comment>
<comment type="caution">
    <text evidence="11">Represents an unconventional myosin. This protein should not be confused with the conventional myosin-1 (MYH1).</text>
</comment>
<evidence type="ECO:0000250" key="1"/>
<evidence type="ECO:0000250" key="2">
    <source>
        <dbReference type="UniProtKB" id="Q12965"/>
    </source>
</evidence>
<evidence type="ECO:0000255" key="3"/>
<evidence type="ECO:0000255" key="4">
    <source>
        <dbReference type="PROSITE-ProRule" id="PRU00116"/>
    </source>
</evidence>
<evidence type="ECO:0000255" key="5">
    <source>
        <dbReference type="PROSITE-ProRule" id="PRU00192"/>
    </source>
</evidence>
<evidence type="ECO:0000255" key="6">
    <source>
        <dbReference type="PROSITE-ProRule" id="PRU00782"/>
    </source>
</evidence>
<evidence type="ECO:0000255" key="7">
    <source>
        <dbReference type="PROSITE-ProRule" id="PRU01093"/>
    </source>
</evidence>
<evidence type="ECO:0000256" key="8">
    <source>
        <dbReference type="SAM" id="MobiDB-lite"/>
    </source>
</evidence>
<evidence type="ECO:0000269" key="9">
    <source>
    </source>
</evidence>
<evidence type="ECO:0000269" key="10">
    <source>
    </source>
</evidence>
<evidence type="ECO:0000305" key="11"/>
<evidence type="ECO:0000305" key="12">
    <source>
    </source>
</evidence>
<organism>
    <name type="scientific">Rattus norvegicus</name>
    <name type="common">Rat</name>
    <dbReference type="NCBI Taxonomy" id="10116"/>
    <lineage>
        <taxon>Eukaryota</taxon>
        <taxon>Metazoa</taxon>
        <taxon>Chordata</taxon>
        <taxon>Craniata</taxon>
        <taxon>Vertebrata</taxon>
        <taxon>Euteleostomi</taxon>
        <taxon>Mammalia</taxon>
        <taxon>Eutheria</taxon>
        <taxon>Euarchontoglires</taxon>
        <taxon>Glires</taxon>
        <taxon>Rodentia</taxon>
        <taxon>Myomorpha</taxon>
        <taxon>Muroidea</taxon>
        <taxon>Muridae</taxon>
        <taxon>Murinae</taxon>
        <taxon>Rattus</taxon>
    </lineage>
</organism>
<dbReference type="EMBL" id="X74815">
    <property type="protein sequence ID" value="CAA52815.1"/>
    <property type="molecule type" value="mRNA"/>
</dbReference>
<dbReference type="PIR" id="S52517">
    <property type="entry name" value="S52517"/>
</dbReference>
<dbReference type="RefSeq" id="NP_775124.1">
    <property type="nucleotide sequence ID" value="NM_173101.2"/>
</dbReference>
<dbReference type="SMR" id="Q63356"/>
<dbReference type="FunCoup" id="Q63356">
    <property type="interactions" value="577"/>
</dbReference>
<dbReference type="STRING" id="10116.ENSRNOP00000074970"/>
<dbReference type="iPTMnet" id="Q63356"/>
<dbReference type="PhosphoSitePlus" id="Q63356"/>
<dbReference type="PaxDb" id="10116-ENSRNOP00000016482"/>
<dbReference type="Ensembl" id="ENSRNOT00000104863.1">
    <property type="protein sequence ID" value="ENSRNOP00000083425.1"/>
    <property type="gene ID" value="ENSRNOG00000061928.2"/>
</dbReference>
<dbReference type="GeneID" id="25484"/>
<dbReference type="KEGG" id="rno:25484"/>
<dbReference type="UCSC" id="RGD:3144">
    <property type="organism name" value="rat"/>
</dbReference>
<dbReference type="AGR" id="RGD:3144"/>
<dbReference type="CTD" id="4643"/>
<dbReference type="RGD" id="3144">
    <property type="gene designation" value="Myo1e"/>
</dbReference>
<dbReference type="eggNOG" id="KOG0162">
    <property type="taxonomic scope" value="Eukaryota"/>
</dbReference>
<dbReference type="GeneTree" id="ENSGT00940000157461"/>
<dbReference type="InParanoid" id="Q63356"/>
<dbReference type="OMA" id="NDQENQC"/>
<dbReference type="OrthoDB" id="6108017at2759"/>
<dbReference type="PhylomeDB" id="Q63356"/>
<dbReference type="PRO" id="PR:Q63356"/>
<dbReference type="Proteomes" id="UP000002494">
    <property type="component" value="Chromosome 8"/>
</dbReference>
<dbReference type="GO" id="GO:0015629">
    <property type="term" value="C:actin cytoskeleton"/>
    <property type="evidence" value="ECO:0000318"/>
    <property type="project" value="GO_Central"/>
</dbReference>
<dbReference type="GO" id="GO:0005912">
    <property type="term" value="C:adherens junction"/>
    <property type="evidence" value="ECO:0000250"/>
    <property type="project" value="UniProtKB"/>
</dbReference>
<dbReference type="GO" id="GO:0005903">
    <property type="term" value="C:brush border"/>
    <property type="evidence" value="ECO:0000266"/>
    <property type="project" value="RGD"/>
</dbReference>
<dbReference type="GO" id="GO:0045334">
    <property type="term" value="C:clathrin-coated endocytic vesicle"/>
    <property type="evidence" value="ECO:0000266"/>
    <property type="project" value="RGD"/>
</dbReference>
<dbReference type="GO" id="GO:0032437">
    <property type="term" value="C:cuticular plate"/>
    <property type="evidence" value="ECO:0000314"/>
    <property type="project" value="RGD"/>
</dbReference>
<dbReference type="GO" id="GO:0005737">
    <property type="term" value="C:cytoplasm"/>
    <property type="evidence" value="ECO:0000250"/>
    <property type="project" value="UniProtKB"/>
</dbReference>
<dbReference type="GO" id="GO:0005856">
    <property type="term" value="C:cytoskeleton"/>
    <property type="evidence" value="ECO:0000250"/>
    <property type="project" value="UniProtKB"/>
</dbReference>
<dbReference type="GO" id="GO:0005902">
    <property type="term" value="C:microvillus"/>
    <property type="evidence" value="ECO:0000318"/>
    <property type="project" value="GO_Central"/>
</dbReference>
<dbReference type="GO" id="GO:0016459">
    <property type="term" value="C:myosin complex"/>
    <property type="evidence" value="ECO:0007669"/>
    <property type="project" value="UniProtKB-KW"/>
</dbReference>
<dbReference type="GO" id="GO:0005886">
    <property type="term" value="C:plasma membrane"/>
    <property type="evidence" value="ECO:0000318"/>
    <property type="project" value="GO_Central"/>
</dbReference>
<dbReference type="GO" id="GO:0032991">
    <property type="term" value="C:protein-containing complex"/>
    <property type="evidence" value="ECO:0000314"/>
    <property type="project" value="RGD"/>
</dbReference>
<dbReference type="GO" id="GO:0051015">
    <property type="term" value="F:actin filament binding"/>
    <property type="evidence" value="ECO:0000250"/>
    <property type="project" value="UniProtKB"/>
</dbReference>
<dbReference type="GO" id="GO:0005524">
    <property type="term" value="F:ATP binding"/>
    <property type="evidence" value="ECO:0007669"/>
    <property type="project" value="UniProtKB-KW"/>
</dbReference>
<dbReference type="GO" id="GO:0016887">
    <property type="term" value="F:ATP hydrolysis activity"/>
    <property type="evidence" value="ECO:0000250"/>
    <property type="project" value="UniProtKB"/>
</dbReference>
<dbReference type="GO" id="GO:0005516">
    <property type="term" value="F:calmodulin binding"/>
    <property type="evidence" value="ECO:0000250"/>
    <property type="project" value="UniProtKB"/>
</dbReference>
<dbReference type="GO" id="GO:0000146">
    <property type="term" value="F:microfilament motor activity"/>
    <property type="evidence" value="ECO:0000318"/>
    <property type="project" value="GO_Central"/>
</dbReference>
<dbReference type="GO" id="GO:0035091">
    <property type="term" value="F:phosphatidylinositol binding"/>
    <property type="evidence" value="ECO:0000250"/>
    <property type="project" value="UniProtKB"/>
</dbReference>
<dbReference type="GO" id="GO:0044877">
    <property type="term" value="F:protein-containing complex binding"/>
    <property type="evidence" value="ECO:0000314"/>
    <property type="project" value="RGD"/>
</dbReference>
<dbReference type="GO" id="GO:0007015">
    <property type="term" value="P:actin filament organization"/>
    <property type="evidence" value="ECO:0000318"/>
    <property type="project" value="GO_Central"/>
</dbReference>
<dbReference type="GO" id="GO:0006897">
    <property type="term" value="P:endocytosis"/>
    <property type="evidence" value="ECO:0000250"/>
    <property type="project" value="UniProtKB"/>
</dbReference>
<dbReference type="GO" id="GO:0032836">
    <property type="term" value="P:glomerular basement membrane development"/>
    <property type="evidence" value="ECO:0000250"/>
    <property type="project" value="UniProtKB"/>
</dbReference>
<dbReference type="GO" id="GO:0003094">
    <property type="term" value="P:glomerular filtration"/>
    <property type="evidence" value="ECO:0000250"/>
    <property type="project" value="UniProtKB"/>
</dbReference>
<dbReference type="GO" id="GO:0032835">
    <property type="term" value="P:glomerulus development"/>
    <property type="evidence" value="ECO:0000318"/>
    <property type="project" value="GO_Central"/>
</dbReference>
<dbReference type="GO" id="GO:0030097">
    <property type="term" value="P:hemopoiesis"/>
    <property type="evidence" value="ECO:0000266"/>
    <property type="project" value="RGD"/>
</dbReference>
<dbReference type="GO" id="GO:0001701">
    <property type="term" value="P:in utero embryonic development"/>
    <property type="evidence" value="ECO:0000266"/>
    <property type="project" value="RGD"/>
</dbReference>
<dbReference type="GO" id="GO:0001822">
    <property type="term" value="P:kidney development"/>
    <property type="evidence" value="ECO:0000266"/>
    <property type="project" value="RGD"/>
</dbReference>
<dbReference type="GO" id="GO:0048008">
    <property type="term" value="P:platelet-derived growth factor receptor signaling pathway"/>
    <property type="evidence" value="ECO:0000266"/>
    <property type="project" value="RGD"/>
</dbReference>
<dbReference type="GO" id="GO:0072015">
    <property type="term" value="P:podocyte development"/>
    <property type="evidence" value="ECO:0000250"/>
    <property type="project" value="UniProtKB"/>
</dbReference>
<dbReference type="GO" id="GO:0035166">
    <property type="term" value="P:post-embryonic hemopoiesis"/>
    <property type="evidence" value="ECO:0000266"/>
    <property type="project" value="RGD"/>
</dbReference>
<dbReference type="GO" id="GO:0001570">
    <property type="term" value="P:vasculogenesis"/>
    <property type="evidence" value="ECO:0000266"/>
    <property type="project" value="RGD"/>
</dbReference>
<dbReference type="CDD" id="cd01378">
    <property type="entry name" value="MYSc_Myo1"/>
    <property type="match status" value="1"/>
</dbReference>
<dbReference type="CDD" id="cd11827">
    <property type="entry name" value="SH3_MyoIe_If_like"/>
    <property type="match status" value="1"/>
</dbReference>
<dbReference type="FunFam" id="1.10.10.820:FF:000001">
    <property type="entry name" value="Myosin heavy chain"/>
    <property type="match status" value="1"/>
</dbReference>
<dbReference type="FunFam" id="1.20.5.4820:FF:000004">
    <property type="entry name" value="Myosin IE"/>
    <property type="match status" value="1"/>
</dbReference>
<dbReference type="FunFam" id="1.20.58.530:FF:000007">
    <property type="entry name" value="Myosin IE"/>
    <property type="match status" value="1"/>
</dbReference>
<dbReference type="FunFam" id="3.40.850.10:FF:000101">
    <property type="entry name" value="Slow myosin heavy chain 2"/>
    <property type="match status" value="1"/>
</dbReference>
<dbReference type="FunFam" id="2.30.30.40:FF:000072">
    <property type="entry name" value="Unconventional Myosin IB"/>
    <property type="match status" value="1"/>
</dbReference>
<dbReference type="FunFam" id="1.20.120.720:FF:000010">
    <property type="entry name" value="Unconventional myosin-Ie"/>
    <property type="match status" value="1"/>
</dbReference>
<dbReference type="Gene3D" id="1.10.10.820">
    <property type="match status" value="1"/>
</dbReference>
<dbReference type="Gene3D" id="1.20.5.4820">
    <property type="match status" value="1"/>
</dbReference>
<dbReference type="Gene3D" id="1.20.58.530">
    <property type="match status" value="1"/>
</dbReference>
<dbReference type="Gene3D" id="3.40.850.10">
    <property type="entry name" value="Kinesin motor domain"/>
    <property type="match status" value="1"/>
</dbReference>
<dbReference type="Gene3D" id="1.20.120.720">
    <property type="entry name" value="Myosin VI head, motor domain, U50 subdomain"/>
    <property type="match status" value="1"/>
</dbReference>
<dbReference type="Gene3D" id="2.30.30.40">
    <property type="entry name" value="SH3 Domains"/>
    <property type="match status" value="1"/>
</dbReference>
<dbReference type="InterPro" id="IPR035507">
    <property type="entry name" value="Ie/If_SH3"/>
</dbReference>
<dbReference type="InterPro" id="IPR036961">
    <property type="entry name" value="Kinesin_motor_dom_sf"/>
</dbReference>
<dbReference type="InterPro" id="IPR001609">
    <property type="entry name" value="Myosin_head_motor_dom-like"/>
</dbReference>
<dbReference type="InterPro" id="IPR010926">
    <property type="entry name" value="Myosin_TH1"/>
</dbReference>
<dbReference type="InterPro" id="IPR036072">
    <property type="entry name" value="MYSc_Myo1"/>
</dbReference>
<dbReference type="InterPro" id="IPR027417">
    <property type="entry name" value="P-loop_NTPase"/>
</dbReference>
<dbReference type="InterPro" id="IPR036028">
    <property type="entry name" value="SH3-like_dom_sf"/>
</dbReference>
<dbReference type="InterPro" id="IPR001452">
    <property type="entry name" value="SH3_domain"/>
</dbReference>
<dbReference type="PANTHER" id="PTHR13140">
    <property type="entry name" value="MYOSIN"/>
    <property type="match status" value="1"/>
</dbReference>
<dbReference type="PANTHER" id="PTHR13140:SF341">
    <property type="entry name" value="UNCONVENTIONAL MYOSIN-IE"/>
    <property type="match status" value="1"/>
</dbReference>
<dbReference type="Pfam" id="PF00063">
    <property type="entry name" value="Myosin_head"/>
    <property type="match status" value="1"/>
</dbReference>
<dbReference type="Pfam" id="PF06017">
    <property type="entry name" value="Myosin_TH1"/>
    <property type="match status" value="1"/>
</dbReference>
<dbReference type="Pfam" id="PF00018">
    <property type="entry name" value="SH3_1"/>
    <property type="match status" value="1"/>
</dbReference>
<dbReference type="PRINTS" id="PR00193">
    <property type="entry name" value="MYOSINHEAVY"/>
</dbReference>
<dbReference type="PRINTS" id="PR00452">
    <property type="entry name" value="SH3DOMAIN"/>
</dbReference>
<dbReference type="SMART" id="SM00242">
    <property type="entry name" value="MYSc"/>
    <property type="match status" value="1"/>
</dbReference>
<dbReference type="SMART" id="SM00326">
    <property type="entry name" value="SH3"/>
    <property type="match status" value="1"/>
</dbReference>
<dbReference type="SUPFAM" id="SSF52540">
    <property type="entry name" value="P-loop containing nucleoside triphosphate hydrolases"/>
    <property type="match status" value="1"/>
</dbReference>
<dbReference type="SUPFAM" id="SSF50044">
    <property type="entry name" value="SH3-domain"/>
    <property type="match status" value="1"/>
</dbReference>
<dbReference type="PROSITE" id="PS50096">
    <property type="entry name" value="IQ"/>
    <property type="match status" value="1"/>
</dbReference>
<dbReference type="PROSITE" id="PS51456">
    <property type="entry name" value="MYOSIN_MOTOR"/>
    <property type="match status" value="1"/>
</dbReference>
<dbReference type="PROSITE" id="PS50002">
    <property type="entry name" value="SH3"/>
    <property type="match status" value="1"/>
</dbReference>
<dbReference type="PROSITE" id="PS51757">
    <property type="entry name" value="TH1"/>
    <property type="match status" value="1"/>
</dbReference>
<feature type="chain" id="PRO_0000123451" description="Unconventional myosin-Ie">
    <location>
        <begin position="1"/>
        <end position="1107"/>
    </location>
</feature>
<feature type="domain" description="Myosin motor" evidence="6">
    <location>
        <begin position="19"/>
        <end position="692"/>
    </location>
</feature>
<feature type="domain" description="IQ" evidence="4">
    <location>
        <begin position="695"/>
        <end position="724"/>
    </location>
</feature>
<feature type="domain" description="TH1" evidence="7">
    <location>
        <begin position="730"/>
        <end position="922"/>
    </location>
</feature>
<feature type="domain" description="SH3" evidence="5">
    <location>
        <begin position="1050"/>
        <end position="1107"/>
    </location>
</feature>
<feature type="region of interest" description="Actin-binding" evidence="3">
    <location>
        <begin position="581"/>
        <end position="591"/>
    </location>
</feature>
<feature type="region of interest" description="Disordered" evidence="8">
    <location>
        <begin position="920"/>
        <end position="1052"/>
    </location>
</feature>
<feature type="compositionally biased region" description="Polar residues" evidence="8">
    <location>
        <begin position="933"/>
        <end position="949"/>
    </location>
</feature>
<feature type="compositionally biased region" description="Polar residues" evidence="8">
    <location>
        <begin position="977"/>
        <end position="989"/>
    </location>
</feature>
<feature type="compositionally biased region" description="Polar residues" evidence="8">
    <location>
        <begin position="998"/>
        <end position="1012"/>
    </location>
</feature>
<feature type="compositionally biased region" description="Pro residues" evidence="8">
    <location>
        <begin position="1034"/>
        <end position="1051"/>
    </location>
</feature>
<feature type="binding site" evidence="3">
    <location>
        <begin position="112"/>
        <end position="119"/>
    </location>
    <ligand>
        <name>ATP</name>
        <dbReference type="ChEBI" id="CHEBI:30616"/>
    </ligand>
</feature>
<feature type="modified residue" description="Phosphoserine" evidence="2">
    <location>
        <position position="1001"/>
    </location>
</feature>
<proteinExistence type="evidence at protein level"/>
<name>MYO1E_RAT</name>
<accession>Q63356</accession>